<evidence type="ECO:0000255" key="1">
    <source>
        <dbReference type="HAMAP-Rule" id="MF_00059"/>
    </source>
</evidence>
<name>RPOA_STRPN</name>
<accession>P66708</accession>
<accession>Q97ST7</accession>
<organism>
    <name type="scientific">Streptococcus pneumoniae serotype 4 (strain ATCC BAA-334 / TIGR4)</name>
    <dbReference type="NCBI Taxonomy" id="170187"/>
    <lineage>
        <taxon>Bacteria</taxon>
        <taxon>Bacillati</taxon>
        <taxon>Bacillota</taxon>
        <taxon>Bacilli</taxon>
        <taxon>Lactobacillales</taxon>
        <taxon>Streptococcaceae</taxon>
        <taxon>Streptococcus</taxon>
    </lineage>
</organism>
<keyword id="KW-0240">DNA-directed RNA polymerase</keyword>
<keyword id="KW-0548">Nucleotidyltransferase</keyword>
<keyword id="KW-1185">Reference proteome</keyword>
<keyword id="KW-0804">Transcription</keyword>
<keyword id="KW-0808">Transferase</keyword>
<dbReference type="EC" id="2.7.7.6" evidence="1"/>
<dbReference type="EMBL" id="AE005672">
    <property type="protein sequence ID" value="AAK74416.1"/>
    <property type="molecule type" value="Genomic_DNA"/>
</dbReference>
<dbReference type="PIR" id="G95027">
    <property type="entry name" value="G95027"/>
</dbReference>
<dbReference type="RefSeq" id="WP_000568988.1">
    <property type="nucleotide sequence ID" value="NZ_CP155539.1"/>
</dbReference>
<dbReference type="SMR" id="P66708"/>
<dbReference type="PaxDb" id="170187-SP_0236"/>
<dbReference type="EnsemblBacteria" id="AAK74416">
    <property type="protein sequence ID" value="AAK74416"/>
    <property type="gene ID" value="SP_0236"/>
</dbReference>
<dbReference type="KEGG" id="spn:SP_0236"/>
<dbReference type="eggNOG" id="COG0202">
    <property type="taxonomic scope" value="Bacteria"/>
</dbReference>
<dbReference type="PhylomeDB" id="P66708"/>
<dbReference type="BioCyc" id="SPNE170187:G1FZB-240-MONOMER"/>
<dbReference type="Proteomes" id="UP000000585">
    <property type="component" value="Chromosome"/>
</dbReference>
<dbReference type="GO" id="GO:0005737">
    <property type="term" value="C:cytoplasm"/>
    <property type="evidence" value="ECO:0007669"/>
    <property type="project" value="UniProtKB-ARBA"/>
</dbReference>
<dbReference type="GO" id="GO:0000428">
    <property type="term" value="C:DNA-directed RNA polymerase complex"/>
    <property type="evidence" value="ECO:0007669"/>
    <property type="project" value="UniProtKB-KW"/>
</dbReference>
<dbReference type="GO" id="GO:0003677">
    <property type="term" value="F:DNA binding"/>
    <property type="evidence" value="ECO:0007669"/>
    <property type="project" value="UniProtKB-UniRule"/>
</dbReference>
<dbReference type="GO" id="GO:0003899">
    <property type="term" value="F:DNA-directed RNA polymerase activity"/>
    <property type="evidence" value="ECO:0007669"/>
    <property type="project" value="UniProtKB-UniRule"/>
</dbReference>
<dbReference type="GO" id="GO:0046983">
    <property type="term" value="F:protein dimerization activity"/>
    <property type="evidence" value="ECO:0007669"/>
    <property type="project" value="InterPro"/>
</dbReference>
<dbReference type="GO" id="GO:0006351">
    <property type="term" value="P:DNA-templated transcription"/>
    <property type="evidence" value="ECO:0007669"/>
    <property type="project" value="UniProtKB-UniRule"/>
</dbReference>
<dbReference type="CDD" id="cd06928">
    <property type="entry name" value="RNAP_alpha_NTD"/>
    <property type="match status" value="1"/>
</dbReference>
<dbReference type="FunFam" id="1.10.150.20:FF:000001">
    <property type="entry name" value="DNA-directed RNA polymerase subunit alpha"/>
    <property type="match status" value="1"/>
</dbReference>
<dbReference type="FunFam" id="2.170.120.12:FF:000001">
    <property type="entry name" value="DNA-directed RNA polymerase subunit alpha"/>
    <property type="match status" value="1"/>
</dbReference>
<dbReference type="Gene3D" id="1.10.150.20">
    <property type="entry name" value="5' to 3' exonuclease, C-terminal subdomain"/>
    <property type="match status" value="1"/>
</dbReference>
<dbReference type="Gene3D" id="2.170.120.12">
    <property type="entry name" value="DNA-directed RNA polymerase, insert domain"/>
    <property type="match status" value="1"/>
</dbReference>
<dbReference type="Gene3D" id="3.30.1360.10">
    <property type="entry name" value="RNA polymerase, RBP11-like subunit"/>
    <property type="match status" value="1"/>
</dbReference>
<dbReference type="HAMAP" id="MF_00059">
    <property type="entry name" value="RNApol_bact_RpoA"/>
    <property type="match status" value="1"/>
</dbReference>
<dbReference type="InterPro" id="IPR011262">
    <property type="entry name" value="DNA-dir_RNA_pol_insert"/>
</dbReference>
<dbReference type="InterPro" id="IPR011263">
    <property type="entry name" value="DNA-dir_RNA_pol_RpoA/D/Rpb3"/>
</dbReference>
<dbReference type="InterPro" id="IPR011773">
    <property type="entry name" value="DNA-dir_RpoA"/>
</dbReference>
<dbReference type="InterPro" id="IPR036603">
    <property type="entry name" value="RBP11-like"/>
</dbReference>
<dbReference type="InterPro" id="IPR011260">
    <property type="entry name" value="RNAP_asu_C"/>
</dbReference>
<dbReference type="InterPro" id="IPR036643">
    <property type="entry name" value="RNApol_insert_sf"/>
</dbReference>
<dbReference type="NCBIfam" id="NF003513">
    <property type="entry name" value="PRK05182.1-2"/>
    <property type="match status" value="1"/>
</dbReference>
<dbReference type="NCBIfam" id="NF003515">
    <property type="entry name" value="PRK05182.2-1"/>
    <property type="match status" value="1"/>
</dbReference>
<dbReference type="NCBIfam" id="NF003518">
    <property type="entry name" value="PRK05182.2-4"/>
    <property type="match status" value="1"/>
</dbReference>
<dbReference type="NCBIfam" id="NF003519">
    <property type="entry name" value="PRK05182.2-5"/>
    <property type="match status" value="1"/>
</dbReference>
<dbReference type="NCBIfam" id="TIGR02027">
    <property type="entry name" value="rpoA"/>
    <property type="match status" value="1"/>
</dbReference>
<dbReference type="Pfam" id="PF01000">
    <property type="entry name" value="RNA_pol_A_bac"/>
    <property type="match status" value="1"/>
</dbReference>
<dbReference type="Pfam" id="PF03118">
    <property type="entry name" value="RNA_pol_A_CTD"/>
    <property type="match status" value="1"/>
</dbReference>
<dbReference type="Pfam" id="PF01193">
    <property type="entry name" value="RNA_pol_L"/>
    <property type="match status" value="1"/>
</dbReference>
<dbReference type="SMART" id="SM00662">
    <property type="entry name" value="RPOLD"/>
    <property type="match status" value="1"/>
</dbReference>
<dbReference type="SUPFAM" id="SSF47789">
    <property type="entry name" value="C-terminal domain of RNA polymerase alpha subunit"/>
    <property type="match status" value="1"/>
</dbReference>
<dbReference type="SUPFAM" id="SSF56553">
    <property type="entry name" value="Insert subdomain of RNA polymerase alpha subunit"/>
    <property type="match status" value="1"/>
</dbReference>
<dbReference type="SUPFAM" id="SSF55257">
    <property type="entry name" value="RBP11-like subunits of RNA polymerase"/>
    <property type="match status" value="1"/>
</dbReference>
<reference key="1">
    <citation type="journal article" date="2001" name="Science">
        <title>Complete genome sequence of a virulent isolate of Streptococcus pneumoniae.</title>
        <authorList>
            <person name="Tettelin H."/>
            <person name="Nelson K.E."/>
            <person name="Paulsen I.T."/>
            <person name="Eisen J.A."/>
            <person name="Read T.D."/>
            <person name="Peterson S.N."/>
            <person name="Heidelberg J.F."/>
            <person name="DeBoy R.T."/>
            <person name="Haft D.H."/>
            <person name="Dodson R.J."/>
            <person name="Durkin A.S."/>
            <person name="Gwinn M.L."/>
            <person name="Kolonay J.F."/>
            <person name="Nelson W.C."/>
            <person name="Peterson J.D."/>
            <person name="Umayam L.A."/>
            <person name="White O."/>
            <person name="Salzberg S.L."/>
            <person name="Lewis M.R."/>
            <person name="Radune D."/>
            <person name="Holtzapple E.K."/>
            <person name="Khouri H.M."/>
            <person name="Wolf A.M."/>
            <person name="Utterback T.R."/>
            <person name="Hansen C.L."/>
            <person name="McDonald L.A."/>
            <person name="Feldblyum T.V."/>
            <person name="Angiuoli S.V."/>
            <person name="Dickinson T."/>
            <person name="Hickey E.K."/>
            <person name="Holt I.E."/>
            <person name="Loftus B.J."/>
            <person name="Yang F."/>
            <person name="Smith H.O."/>
            <person name="Venter J.C."/>
            <person name="Dougherty B.A."/>
            <person name="Morrison D.A."/>
            <person name="Hollingshead S.K."/>
            <person name="Fraser C.M."/>
        </authorList>
    </citation>
    <scope>NUCLEOTIDE SEQUENCE [LARGE SCALE GENOMIC DNA]</scope>
    <source>
        <strain>ATCC BAA-334 / TIGR4</strain>
    </source>
</reference>
<sequence>MIEFEKPNITKIDENKDYGKFVIEPLERGYGTTLGNSLRRVLLASLPGAAVTSINIDGVLHEFDTVPGVREDVMQIILNIKGIAVKSYVEDEKIIELDVEGPAEVTAGDILTDSDIEIVNPDHYLFTIGEGSSLKATMTVNSGRGYVPADENKKDNAPVGTLAVDSIYTPVTKVNYQVEPARVGSNDGFDKLTLEILTNGTIIPEDALGLSARILTEHLDLFTNLTEIAKSTEVMKEADTESDDRILDRTIEELDLSVRSYNCLKRAGINTVHDLTEKSEAEMMKVRNLGRKSLEEVKLKLIDLGLGLKDK</sequence>
<protein>
    <recommendedName>
        <fullName evidence="1">DNA-directed RNA polymerase subunit alpha</fullName>
        <shortName evidence="1">RNAP subunit alpha</shortName>
        <ecNumber evidence="1">2.7.7.6</ecNumber>
    </recommendedName>
    <alternativeName>
        <fullName evidence="1">RNA polymerase subunit alpha</fullName>
    </alternativeName>
    <alternativeName>
        <fullName evidence="1">Transcriptase subunit alpha</fullName>
    </alternativeName>
</protein>
<proteinExistence type="inferred from homology"/>
<comment type="function">
    <text evidence="1">DNA-dependent RNA polymerase catalyzes the transcription of DNA into RNA using the four ribonucleoside triphosphates as substrates.</text>
</comment>
<comment type="catalytic activity">
    <reaction evidence="1">
        <text>RNA(n) + a ribonucleoside 5'-triphosphate = RNA(n+1) + diphosphate</text>
        <dbReference type="Rhea" id="RHEA:21248"/>
        <dbReference type="Rhea" id="RHEA-COMP:14527"/>
        <dbReference type="Rhea" id="RHEA-COMP:17342"/>
        <dbReference type="ChEBI" id="CHEBI:33019"/>
        <dbReference type="ChEBI" id="CHEBI:61557"/>
        <dbReference type="ChEBI" id="CHEBI:140395"/>
        <dbReference type="EC" id="2.7.7.6"/>
    </reaction>
</comment>
<comment type="subunit">
    <text evidence="1">Homodimer. The RNAP catalytic core consists of 2 alpha, 1 beta, 1 beta' and 1 omega subunit. When a sigma factor is associated with the core the holoenzyme is formed, which can initiate transcription.</text>
</comment>
<comment type="domain">
    <text evidence="1">The N-terminal domain is essential for RNAP assembly and basal transcription, whereas the C-terminal domain is involved in interaction with transcriptional regulators and with upstream promoter elements.</text>
</comment>
<comment type="similarity">
    <text evidence="1">Belongs to the RNA polymerase alpha chain family.</text>
</comment>
<gene>
    <name evidence="1" type="primary">rpoA</name>
    <name type="ordered locus">SP_0236</name>
</gene>
<feature type="chain" id="PRO_0000175394" description="DNA-directed RNA polymerase subunit alpha">
    <location>
        <begin position="1"/>
        <end position="311"/>
    </location>
</feature>
<feature type="region of interest" description="Alpha N-terminal domain (alpha-NTD)" evidence="1">
    <location>
        <begin position="1"/>
        <end position="226"/>
    </location>
</feature>
<feature type="region of interest" description="Alpha C-terminal domain (alpha-CTD)" evidence="1">
    <location>
        <begin position="243"/>
        <end position="311"/>
    </location>
</feature>